<proteinExistence type="inferred from homology"/>
<sequence length="58" mass="6452">MATVKVTLIKSVSGRIPNHKLCVKGLGLRRIGHTVEVQDTPENRGMINKAYYMLKVEG</sequence>
<dbReference type="EMBL" id="CT573326">
    <property type="protein sequence ID" value="CAK13454.1"/>
    <property type="molecule type" value="Genomic_DNA"/>
</dbReference>
<dbReference type="RefSeq" id="WP_011531895.1">
    <property type="nucleotide sequence ID" value="NC_008027.1"/>
</dbReference>
<dbReference type="SMR" id="Q1IFU8"/>
<dbReference type="STRING" id="384676.PSEEN0508"/>
<dbReference type="GeneID" id="93675540"/>
<dbReference type="KEGG" id="pen:PSEEN0508"/>
<dbReference type="eggNOG" id="COG1841">
    <property type="taxonomic scope" value="Bacteria"/>
</dbReference>
<dbReference type="HOGENOM" id="CLU_131047_1_4_6"/>
<dbReference type="OrthoDB" id="9812790at2"/>
<dbReference type="Proteomes" id="UP000000658">
    <property type="component" value="Chromosome"/>
</dbReference>
<dbReference type="GO" id="GO:0022625">
    <property type="term" value="C:cytosolic large ribosomal subunit"/>
    <property type="evidence" value="ECO:0007669"/>
    <property type="project" value="TreeGrafter"/>
</dbReference>
<dbReference type="GO" id="GO:0003735">
    <property type="term" value="F:structural constituent of ribosome"/>
    <property type="evidence" value="ECO:0007669"/>
    <property type="project" value="InterPro"/>
</dbReference>
<dbReference type="GO" id="GO:0006412">
    <property type="term" value="P:translation"/>
    <property type="evidence" value="ECO:0007669"/>
    <property type="project" value="UniProtKB-UniRule"/>
</dbReference>
<dbReference type="CDD" id="cd01658">
    <property type="entry name" value="Ribosomal_L30"/>
    <property type="match status" value="1"/>
</dbReference>
<dbReference type="FunFam" id="3.30.1390.20:FF:000001">
    <property type="entry name" value="50S ribosomal protein L30"/>
    <property type="match status" value="1"/>
</dbReference>
<dbReference type="Gene3D" id="3.30.1390.20">
    <property type="entry name" value="Ribosomal protein L30, ferredoxin-like fold domain"/>
    <property type="match status" value="1"/>
</dbReference>
<dbReference type="HAMAP" id="MF_01371_B">
    <property type="entry name" value="Ribosomal_uL30_B"/>
    <property type="match status" value="1"/>
</dbReference>
<dbReference type="InterPro" id="IPR036919">
    <property type="entry name" value="Ribo_uL30_ferredoxin-like_sf"/>
</dbReference>
<dbReference type="InterPro" id="IPR005996">
    <property type="entry name" value="Ribosomal_uL30_bac-type"/>
</dbReference>
<dbReference type="InterPro" id="IPR016082">
    <property type="entry name" value="Ribosomal_uL30_ferredoxin-like"/>
</dbReference>
<dbReference type="NCBIfam" id="TIGR01308">
    <property type="entry name" value="rpmD_bact"/>
    <property type="match status" value="1"/>
</dbReference>
<dbReference type="PANTHER" id="PTHR15892:SF2">
    <property type="entry name" value="LARGE RIBOSOMAL SUBUNIT PROTEIN UL30M"/>
    <property type="match status" value="1"/>
</dbReference>
<dbReference type="PANTHER" id="PTHR15892">
    <property type="entry name" value="MITOCHONDRIAL RIBOSOMAL PROTEIN L30"/>
    <property type="match status" value="1"/>
</dbReference>
<dbReference type="Pfam" id="PF00327">
    <property type="entry name" value="Ribosomal_L30"/>
    <property type="match status" value="1"/>
</dbReference>
<dbReference type="PIRSF" id="PIRSF002211">
    <property type="entry name" value="Ribosomal_L30_bac-type"/>
    <property type="match status" value="1"/>
</dbReference>
<dbReference type="SUPFAM" id="SSF55129">
    <property type="entry name" value="Ribosomal protein L30p/L7e"/>
    <property type="match status" value="1"/>
</dbReference>
<accession>Q1IFU8</accession>
<comment type="subunit">
    <text evidence="1">Part of the 50S ribosomal subunit.</text>
</comment>
<comment type="similarity">
    <text evidence="1">Belongs to the universal ribosomal protein uL30 family.</text>
</comment>
<name>RL30_PSEE4</name>
<reference key="1">
    <citation type="journal article" date="2006" name="Nat. Biotechnol.">
        <title>Complete genome sequence of the entomopathogenic and metabolically versatile soil bacterium Pseudomonas entomophila.</title>
        <authorList>
            <person name="Vodovar N."/>
            <person name="Vallenet D."/>
            <person name="Cruveiller S."/>
            <person name="Rouy Z."/>
            <person name="Barbe V."/>
            <person name="Acosta C."/>
            <person name="Cattolico L."/>
            <person name="Jubin C."/>
            <person name="Lajus A."/>
            <person name="Segurens B."/>
            <person name="Vacherie B."/>
            <person name="Wincker P."/>
            <person name="Weissenbach J."/>
            <person name="Lemaitre B."/>
            <person name="Medigue C."/>
            <person name="Boccard F."/>
        </authorList>
    </citation>
    <scope>NUCLEOTIDE SEQUENCE [LARGE SCALE GENOMIC DNA]</scope>
    <source>
        <strain>L48</strain>
    </source>
</reference>
<organism>
    <name type="scientific">Pseudomonas entomophila (strain L48)</name>
    <dbReference type="NCBI Taxonomy" id="384676"/>
    <lineage>
        <taxon>Bacteria</taxon>
        <taxon>Pseudomonadati</taxon>
        <taxon>Pseudomonadota</taxon>
        <taxon>Gammaproteobacteria</taxon>
        <taxon>Pseudomonadales</taxon>
        <taxon>Pseudomonadaceae</taxon>
        <taxon>Pseudomonas</taxon>
    </lineage>
</organism>
<gene>
    <name evidence="1" type="primary">rpmD</name>
    <name type="ordered locus">PSEEN0508</name>
</gene>
<keyword id="KW-0687">Ribonucleoprotein</keyword>
<keyword id="KW-0689">Ribosomal protein</keyword>
<protein>
    <recommendedName>
        <fullName evidence="1">Large ribosomal subunit protein uL30</fullName>
    </recommendedName>
    <alternativeName>
        <fullName evidence="2">50S ribosomal protein L30</fullName>
    </alternativeName>
</protein>
<feature type="chain" id="PRO_1000056093" description="Large ribosomal subunit protein uL30">
    <location>
        <begin position="1"/>
        <end position="58"/>
    </location>
</feature>
<evidence type="ECO:0000255" key="1">
    <source>
        <dbReference type="HAMAP-Rule" id="MF_01371"/>
    </source>
</evidence>
<evidence type="ECO:0000305" key="2"/>